<sequence>MTVCSRRNFVSGMGAVILMTGTSLPAFAKENKADKPKRYAMIHDENACIGCTACMDSCRDVNQVPEGVSRLEILRSEPYGEFPNQEYEFFRQSCQHCTNAPCVAVCPTGASFIDKETGIVDVHKDLCIGCQYCIAVCPYRVRFIHPIHRTADKCNFCRDTNLANGKQPACVEACPTKALTFGDMNDPTSAVSRKVKEKPVYRTKVELGTQPNLYHIPFQHGEPRR</sequence>
<keyword id="KW-0004">4Fe-4S</keyword>
<keyword id="KW-0249">Electron transport</keyword>
<keyword id="KW-0408">Iron</keyword>
<keyword id="KW-0411">Iron-sulfur</keyword>
<keyword id="KW-0479">Metal-binding</keyword>
<keyword id="KW-0560">Oxidoreductase</keyword>
<keyword id="KW-1185">Reference proteome</keyword>
<keyword id="KW-0677">Repeat</keyword>
<keyword id="KW-0732">Signal</keyword>
<keyword id="KW-0813">Transport</keyword>
<name>NRFC_HAEIN</name>
<evidence type="ECO:0000250" key="1"/>
<evidence type="ECO:0000255" key="2">
    <source>
        <dbReference type="PROSITE-ProRule" id="PRU00648"/>
    </source>
</evidence>
<evidence type="ECO:0000255" key="3">
    <source>
        <dbReference type="PROSITE-ProRule" id="PRU00711"/>
    </source>
</evidence>
<feature type="signal peptide" description="Tat-type signal" evidence="2">
    <location>
        <begin position="1"/>
        <end position="28"/>
    </location>
</feature>
<feature type="chain" id="PRO_0000008846" description="Protein NrfC homolog">
    <location>
        <begin position="29"/>
        <end position="225"/>
    </location>
</feature>
<feature type="domain" description="4Fe-4S ferredoxin-type 1" evidence="3">
    <location>
        <begin position="39"/>
        <end position="67"/>
    </location>
</feature>
<feature type="domain" description="4Fe-4S ferredoxin-type 2" evidence="3">
    <location>
        <begin position="85"/>
        <end position="116"/>
    </location>
</feature>
<feature type="domain" description="4Fe-4S ferredoxin-type 3" evidence="3">
    <location>
        <begin position="118"/>
        <end position="147"/>
    </location>
</feature>
<feature type="binding site" evidence="1">
    <location>
        <position position="48"/>
    </location>
    <ligand>
        <name>[4Fe-4S] cluster</name>
        <dbReference type="ChEBI" id="CHEBI:49883"/>
        <label>1</label>
    </ligand>
</feature>
<feature type="binding site" evidence="1">
    <location>
        <position position="51"/>
    </location>
    <ligand>
        <name>[4Fe-4S] cluster</name>
        <dbReference type="ChEBI" id="CHEBI:49883"/>
        <label>1</label>
    </ligand>
</feature>
<feature type="binding site" evidence="1">
    <location>
        <position position="54"/>
    </location>
    <ligand>
        <name>[4Fe-4S] cluster</name>
        <dbReference type="ChEBI" id="CHEBI:49883"/>
        <label>1</label>
    </ligand>
</feature>
<feature type="binding site" evidence="1">
    <location>
        <position position="58"/>
    </location>
    <ligand>
        <name>[4Fe-4S] cluster</name>
        <dbReference type="ChEBI" id="CHEBI:49883"/>
        <label>2</label>
    </ligand>
</feature>
<feature type="binding site" evidence="1">
    <location>
        <position position="94"/>
    </location>
    <ligand>
        <name>[4Fe-4S] cluster</name>
        <dbReference type="ChEBI" id="CHEBI:49883"/>
        <label>3</label>
    </ligand>
</feature>
<feature type="binding site" evidence="1">
    <location>
        <position position="97"/>
    </location>
    <ligand>
        <name>[4Fe-4S] cluster</name>
        <dbReference type="ChEBI" id="CHEBI:49883"/>
        <label>3</label>
    </ligand>
</feature>
<feature type="binding site" evidence="1">
    <location>
        <position position="102"/>
    </location>
    <ligand>
        <name>[4Fe-4S] cluster</name>
        <dbReference type="ChEBI" id="CHEBI:49883"/>
        <label>3</label>
    </ligand>
</feature>
<feature type="binding site" evidence="1">
    <location>
        <position position="106"/>
    </location>
    <ligand>
        <name>[4Fe-4S] cluster</name>
        <dbReference type="ChEBI" id="CHEBI:49883"/>
        <label>4</label>
    </ligand>
</feature>
<feature type="binding site" evidence="1">
    <location>
        <position position="127"/>
    </location>
    <ligand>
        <name>[4Fe-4S] cluster</name>
        <dbReference type="ChEBI" id="CHEBI:49883"/>
        <label>4</label>
    </ligand>
</feature>
<feature type="binding site" evidence="1">
    <location>
        <position position="130"/>
    </location>
    <ligand>
        <name>[4Fe-4S] cluster</name>
        <dbReference type="ChEBI" id="CHEBI:49883"/>
        <label>4</label>
    </ligand>
</feature>
<feature type="binding site" evidence="1">
    <location>
        <position position="133"/>
    </location>
    <ligand>
        <name>[4Fe-4S] cluster</name>
        <dbReference type="ChEBI" id="CHEBI:49883"/>
        <label>4</label>
    </ligand>
</feature>
<feature type="binding site" evidence="1">
    <location>
        <position position="137"/>
    </location>
    <ligand>
        <name>[4Fe-4S] cluster</name>
        <dbReference type="ChEBI" id="CHEBI:49883"/>
        <label>3</label>
    </ligand>
</feature>
<feature type="binding site" evidence="1">
    <location>
        <position position="154"/>
    </location>
    <ligand>
        <name>[4Fe-4S] cluster</name>
        <dbReference type="ChEBI" id="CHEBI:49883"/>
        <label>2</label>
    </ligand>
</feature>
<feature type="binding site" evidence="1">
    <location>
        <position position="157"/>
    </location>
    <ligand>
        <name>[4Fe-4S] cluster</name>
        <dbReference type="ChEBI" id="CHEBI:49883"/>
        <label>2</label>
    </ligand>
</feature>
<feature type="binding site" evidence="1">
    <location>
        <position position="170"/>
    </location>
    <ligand>
        <name>[4Fe-4S] cluster</name>
        <dbReference type="ChEBI" id="CHEBI:49883"/>
        <label>2</label>
    </ligand>
</feature>
<feature type="binding site" evidence="1">
    <location>
        <position position="174"/>
    </location>
    <ligand>
        <name>[4Fe-4S] cluster</name>
        <dbReference type="ChEBI" id="CHEBI:49883"/>
        <label>1</label>
    </ligand>
</feature>
<reference key="1">
    <citation type="journal article" date="1995" name="Science">
        <title>Whole-genome random sequencing and assembly of Haemophilus influenzae Rd.</title>
        <authorList>
            <person name="Fleischmann R.D."/>
            <person name="Adams M.D."/>
            <person name="White O."/>
            <person name="Clayton R.A."/>
            <person name="Kirkness E.F."/>
            <person name="Kerlavage A.R."/>
            <person name="Bult C.J."/>
            <person name="Tomb J.-F."/>
            <person name="Dougherty B.A."/>
            <person name="Merrick J.M."/>
            <person name="McKenney K."/>
            <person name="Sutton G.G."/>
            <person name="FitzHugh W."/>
            <person name="Fields C.A."/>
            <person name="Gocayne J.D."/>
            <person name="Scott J.D."/>
            <person name="Shirley R."/>
            <person name="Liu L.-I."/>
            <person name="Glodek A."/>
            <person name="Kelley J.M."/>
            <person name="Weidman J.F."/>
            <person name="Phillips C.A."/>
            <person name="Spriggs T."/>
            <person name="Hedblom E."/>
            <person name="Cotton M.D."/>
            <person name="Utterback T.R."/>
            <person name="Hanna M.C."/>
            <person name="Nguyen D.T."/>
            <person name="Saudek D.M."/>
            <person name="Brandon R.C."/>
            <person name="Fine L.D."/>
            <person name="Fritchman J.L."/>
            <person name="Fuhrmann J.L."/>
            <person name="Geoghagen N.S.M."/>
            <person name="Gnehm C.L."/>
            <person name="McDonald L.A."/>
            <person name="Small K.V."/>
            <person name="Fraser C.M."/>
            <person name="Smith H.O."/>
            <person name="Venter J.C."/>
        </authorList>
    </citation>
    <scope>NUCLEOTIDE SEQUENCE [LARGE SCALE GENOMIC DNA]</scope>
    <source>
        <strain>ATCC 51907 / DSM 11121 / KW20 / Rd</strain>
    </source>
</reference>
<dbReference type="EMBL" id="L42023">
    <property type="protein sequence ID" value="AAC22725.1"/>
    <property type="molecule type" value="Genomic_DNA"/>
</dbReference>
<dbReference type="PIR" id="A64181">
    <property type="entry name" value="A64181"/>
</dbReference>
<dbReference type="RefSeq" id="NP_439225.1">
    <property type="nucleotide sequence ID" value="NC_000907.1"/>
</dbReference>
<dbReference type="SMR" id="P45015"/>
<dbReference type="STRING" id="71421.HI_1067"/>
<dbReference type="EnsemblBacteria" id="AAC22725">
    <property type="protein sequence ID" value="AAC22725"/>
    <property type="gene ID" value="HI_1067"/>
</dbReference>
<dbReference type="KEGG" id="hin:HI_1067"/>
<dbReference type="PATRIC" id="fig|71421.8.peg.1111"/>
<dbReference type="eggNOG" id="COG0437">
    <property type="taxonomic scope" value="Bacteria"/>
</dbReference>
<dbReference type="HOGENOM" id="CLU_043374_1_3_6"/>
<dbReference type="OrthoDB" id="9779457at2"/>
<dbReference type="PhylomeDB" id="P45015"/>
<dbReference type="BioCyc" id="HINF71421:G1GJ1-1103-MONOMER"/>
<dbReference type="Proteomes" id="UP000000579">
    <property type="component" value="Chromosome"/>
</dbReference>
<dbReference type="GO" id="GO:0051539">
    <property type="term" value="F:4 iron, 4 sulfur cluster binding"/>
    <property type="evidence" value="ECO:0007669"/>
    <property type="project" value="UniProtKB-KW"/>
</dbReference>
<dbReference type="GO" id="GO:0046872">
    <property type="term" value="F:metal ion binding"/>
    <property type="evidence" value="ECO:0007669"/>
    <property type="project" value="UniProtKB-KW"/>
</dbReference>
<dbReference type="GO" id="GO:0016491">
    <property type="term" value="F:oxidoreductase activity"/>
    <property type="evidence" value="ECO:0007669"/>
    <property type="project" value="UniProtKB-KW"/>
</dbReference>
<dbReference type="CDD" id="cd10551">
    <property type="entry name" value="PsrB"/>
    <property type="match status" value="1"/>
</dbReference>
<dbReference type="FunFam" id="3.30.70.20:FF:000014">
    <property type="entry name" value="Cytochrome c nitrite reductase, Fe-S protein"/>
    <property type="match status" value="1"/>
</dbReference>
<dbReference type="Gene3D" id="3.30.70.20">
    <property type="match status" value="2"/>
</dbReference>
<dbReference type="InterPro" id="IPR017896">
    <property type="entry name" value="4Fe4S_Fe-S-bd"/>
</dbReference>
<dbReference type="InterPro" id="IPR017900">
    <property type="entry name" value="4Fe4S_Fe_S_CS"/>
</dbReference>
<dbReference type="InterPro" id="IPR017567">
    <property type="entry name" value="Cyt_c_NO2Rdtase_NrfC"/>
</dbReference>
<dbReference type="InterPro" id="IPR050954">
    <property type="entry name" value="ET_IronSulfur_Cluster-Binding"/>
</dbReference>
<dbReference type="InterPro" id="IPR006311">
    <property type="entry name" value="TAT_signal"/>
</dbReference>
<dbReference type="NCBIfam" id="TIGR03149">
    <property type="entry name" value="cyt_nit_nrfC"/>
    <property type="match status" value="1"/>
</dbReference>
<dbReference type="PANTHER" id="PTHR43177">
    <property type="entry name" value="PROTEIN NRFC"/>
    <property type="match status" value="1"/>
</dbReference>
<dbReference type="PANTHER" id="PTHR43177:SF3">
    <property type="entry name" value="PROTEIN NRFC HOMOLOG"/>
    <property type="match status" value="1"/>
</dbReference>
<dbReference type="Pfam" id="PF13247">
    <property type="entry name" value="Fer4_11"/>
    <property type="match status" value="1"/>
</dbReference>
<dbReference type="Pfam" id="PF12800">
    <property type="entry name" value="Fer4_4"/>
    <property type="match status" value="1"/>
</dbReference>
<dbReference type="SUPFAM" id="SSF54862">
    <property type="entry name" value="4Fe-4S ferredoxins"/>
    <property type="match status" value="1"/>
</dbReference>
<dbReference type="PROSITE" id="PS00198">
    <property type="entry name" value="4FE4S_FER_1"/>
    <property type="match status" value="1"/>
</dbReference>
<dbReference type="PROSITE" id="PS51379">
    <property type="entry name" value="4FE4S_FER_2"/>
    <property type="match status" value="3"/>
</dbReference>
<dbReference type="PROSITE" id="PS51318">
    <property type="entry name" value="TAT"/>
    <property type="match status" value="1"/>
</dbReference>
<proteinExistence type="inferred from homology"/>
<accession>P45015</accession>
<comment type="function">
    <text evidence="1">Probably involved in the transfer of electrons from the quinone pool to the type-c cytochromes.</text>
</comment>
<comment type="PTM">
    <text>Predicted to be exported by the Tat system. The position of the signal peptide cleavage has not been experimentally proven.</text>
</comment>
<gene>
    <name type="primary">nrfC</name>
    <name type="ordered locus">HI_1067</name>
</gene>
<organism>
    <name type="scientific">Haemophilus influenzae (strain ATCC 51907 / DSM 11121 / KW20 / Rd)</name>
    <dbReference type="NCBI Taxonomy" id="71421"/>
    <lineage>
        <taxon>Bacteria</taxon>
        <taxon>Pseudomonadati</taxon>
        <taxon>Pseudomonadota</taxon>
        <taxon>Gammaproteobacteria</taxon>
        <taxon>Pasteurellales</taxon>
        <taxon>Pasteurellaceae</taxon>
        <taxon>Haemophilus</taxon>
    </lineage>
</organism>
<protein>
    <recommendedName>
        <fullName>Protein NrfC homolog</fullName>
    </recommendedName>
</protein>